<name>IUTB_VIBVL</name>
<comment type="function">
    <text evidence="2 3 6">Ferric-siderophore reductase involved in iron removal from the siderophores after their transport into the cell (Probable). Acts as a major ferric-aerobactin reductase catalyzing the reduction of Fe(3+)-aerobactin, a citrate-hydroxamate siderophore produced by other bacteria. Catalyzes reduction of Fe(3+)-vulnibactin, a catecholate siderophore synthesized by V.vulnificus, in the absence of VuuB (PubMed:28150143, PubMed:32681432). Catalyzes reduction of ferrioxamine B and Fe(3+)-vibriobactin in vitro. No activity with Fe(3+)-enterobactin. Catalyzes reduction of ferric chelating compound Fe(3+)-nitrilotriacetic acid (NTA) in the presence of NADH, NADPH or reduced glutathione (GSH) as its electron donor in vitro. Also catalyzes reduction of ferric chelating compounds Fe(3+)-citrate and Fe(3+)-EDTA as well as non-complexed FeCl3 in the presence of GSH as its electron donor in vitro. Highest activity with Fe(3+)-NTA as electron acceptor and GSH as donor (PubMed:32681432).</text>
</comment>
<comment type="catalytic activity">
    <reaction evidence="3">
        <text>2 a Fe(II)-siderophore + NAD(+) + H(+) = 2 a Fe(III)-siderophore + NADH</text>
        <dbReference type="Rhea" id="RHEA:15061"/>
        <dbReference type="Rhea" id="RHEA-COMP:11342"/>
        <dbReference type="Rhea" id="RHEA-COMP:11344"/>
        <dbReference type="ChEBI" id="CHEBI:15378"/>
        <dbReference type="ChEBI" id="CHEBI:29033"/>
        <dbReference type="ChEBI" id="CHEBI:29034"/>
        <dbReference type="ChEBI" id="CHEBI:57540"/>
        <dbReference type="ChEBI" id="CHEBI:57945"/>
        <dbReference type="EC" id="1.16.1.10"/>
    </reaction>
    <physiologicalReaction direction="right-to-left" evidence="3">
        <dbReference type="Rhea" id="RHEA:15063"/>
    </physiologicalReaction>
</comment>
<comment type="catalytic activity">
    <reaction evidence="3">
        <text>2 a Fe(II)-siderophore + NADP(+) + H(+) = 2 a Fe(III)-siderophore + NADPH</text>
        <dbReference type="Rhea" id="RHEA:28795"/>
        <dbReference type="Rhea" id="RHEA-COMP:11342"/>
        <dbReference type="Rhea" id="RHEA-COMP:11344"/>
        <dbReference type="ChEBI" id="CHEBI:15378"/>
        <dbReference type="ChEBI" id="CHEBI:29033"/>
        <dbReference type="ChEBI" id="CHEBI:29034"/>
        <dbReference type="ChEBI" id="CHEBI:57783"/>
        <dbReference type="ChEBI" id="CHEBI:58349"/>
        <dbReference type="EC" id="1.16.1.10"/>
    </reaction>
    <physiologicalReaction direction="right-to-left" evidence="3">
        <dbReference type="Rhea" id="RHEA:28797"/>
    </physiologicalReaction>
</comment>
<comment type="cofactor">
    <cofactor evidence="1">
        <name>[2Fe-2S] cluster</name>
        <dbReference type="ChEBI" id="CHEBI:190135"/>
    </cofactor>
    <text evidence="1">Binds 1 [2Fe-2S] cluster.</text>
</comment>
<comment type="biophysicochemical properties">
    <kinetics>
        <Vmax evidence="3">6.83 nmol/min/mg enzyme with Fe(3+)-aerobactin as substrate and glutathione (GSH) as electron donor (at pH 8.0 and 30 degrees Celsius)</Vmax>
        <Vmax evidence="3">2.32 nmol/min/mg enzyme with Fe(3+)-vulnibactin as substrate and glutathione (GSH) as electron donor (at pH 8.0 and 30 degrees Celsius)</Vmax>
        <Vmax evidence="3">1.44 nmol/min/mg enzyme with ferrioxamine B as substrate and glutathione (GSH) as electron donor (at pH 8.0 and 30 degrees Celsius)</Vmax>
        <Vmax evidence="3">1.1 nmol/min/mg enzyme with Fe(3+)-vibriobactin as substrate and glutathione (GSH) as electron donor (at pH 8.0 and 30 degrees Celsius)</Vmax>
        <Vmax evidence="3">10.98 nmol/min/mg enzyme with Fe(3+)-nitrilotriacetic acid (NTA) as electron acceptor and glutathione (GSH) as electron donor (at pH 8.0 and 37 degrees Celsius)</Vmax>
        <Vmax evidence="3">14.24 nmol/min/mg enzyme with Fe(3+)-nitrilotriacetic acid (NTA) as electron acceptor and simultaneous presence of glutathione (GSH) and NADPH as electron donors (at pH 8.0 and 37 degrees Celsius)</Vmax>
    </kinetics>
    <phDependence>
        <text evidence="3">Optimum pH is 8.5 with Fe(3+)-nitrilotriacetic acid (NTA) as electron acceptor.</text>
    </phDependence>
    <temperatureDependence>
        <text evidence="3">Optimum temperature is 45 degrees Celsius with Fe(3+)-nitrilotriacetic acid (NTA) as electron acceptor.</text>
    </temperatureDependence>
</comment>
<comment type="subunit">
    <text evidence="3">Monomer.</text>
</comment>
<comment type="subcellular location">
    <subcellularLocation>
        <location evidence="2">Cytoplasm</location>
    </subcellularLocation>
</comment>
<comment type="induction">
    <text evidence="2 3">Expression is up-regulated by low iron concentration condition. Expression is repressed by Fur under iron-repleted condition.</text>
</comment>
<comment type="disruption phenotype">
    <text evidence="2 3">No effect on growth under low iron condition. No effect on vulnibactin synthesis or secretion. Double deletion iutB/vuuB mutant secretes vulnibactin as wild-type, but has a significant growth impairment under low iron condition. Triple deletion iutB/vuuB/ics mutant supplemented with aerobactin has a significant growth impairment under low iron condition (PubMed:28150143). Double deletion iutB/ics mutant does not grow under low iron condition, but addition of vulnibactin restores the growth (PubMed:32681432).</text>
</comment>
<protein>
    <recommendedName>
        <fullName evidence="4">Ferric aerobactin reductase IutB</fullName>
        <ecNumber evidence="3">1.16.1.10</ecNumber>
    </recommendedName>
    <alternativeName>
        <fullName evidence="5">Ferric chelate reductase</fullName>
        <shortName evidence="5">FCR</shortName>
    </alternativeName>
    <alternativeName>
        <fullName evidence="5 7">Ferric reductase</fullName>
    </alternativeName>
</protein>
<sequence length="244" mass="28349">MSGHSFFEHLFEHSQHVTPYLHGAIKPRPERCAEHGFIHIEHASSDHIRALYESLKLAHPEAGAAYWLTRTWTLLCWQPLYVAFIAIYSCQGLPKLSSMGQHVQPRFVSGYQFDDDEYRQGSEQELIAHAGKELCALFDYFRQEMSLWTRIRPGFTQHLFADGVFGCLVKLSQFYPTLSGDYFLEQARLWLAACQLPEKLIQSLRYDETSRQLSLVRTSCCLVYKCQGRELCRDCPRHPDNKRE</sequence>
<keyword id="KW-0001">2Fe-2S</keyword>
<keyword id="KW-0963">Cytoplasm</keyword>
<keyword id="KW-0408">Iron</keyword>
<keyword id="KW-0411">Iron-sulfur</keyword>
<keyword id="KW-0479">Metal-binding</keyword>
<keyword id="KW-0520">NAD</keyword>
<keyword id="KW-0521">NADP</keyword>
<keyword id="KW-0560">Oxidoreductase</keyword>
<evidence type="ECO:0000250" key="1">
    <source>
        <dbReference type="UniProtKB" id="P39405"/>
    </source>
</evidence>
<evidence type="ECO:0000269" key="2">
    <source>
    </source>
</evidence>
<evidence type="ECO:0000269" key="3">
    <source>
    </source>
</evidence>
<evidence type="ECO:0000303" key="4">
    <source>
    </source>
</evidence>
<evidence type="ECO:0000303" key="5">
    <source>
    </source>
</evidence>
<evidence type="ECO:0000305" key="6"/>
<evidence type="ECO:0000312" key="7">
    <source>
        <dbReference type="EMBL" id="BAX35098.1"/>
    </source>
</evidence>
<organism evidence="7">
    <name type="scientific">Vibrio vulnificus</name>
    <dbReference type="NCBI Taxonomy" id="672"/>
    <lineage>
        <taxon>Bacteria</taxon>
        <taxon>Pseudomonadati</taxon>
        <taxon>Pseudomonadota</taxon>
        <taxon>Gammaproteobacteria</taxon>
        <taxon>Vibrionales</taxon>
        <taxon>Vibrionaceae</taxon>
        <taxon>Vibrio</taxon>
    </lineage>
</organism>
<reference evidence="7" key="1">
    <citation type="journal article" date="2017" name="BioMetals">
        <title>IutB participates in the ferric-vulnibactin utilization system in Vibrio vulnificus M2799.</title>
        <authorList>
            <person name="Kawano H."/>
            <person name="Miyamoto K."/>
            <person name="Negoro M."/>
            <person name="Zushi E."/>
            <person name="Tsuchiya T."/>
            <person name="Tanabe T."/>
            <person name="Funahashi T."/>
            <person name="Tsujibo H."/>
        </authorList>
    </citation>
    <scope>NUCLEOTIDE SEQUENCE [GENOMIC DNA]</scope>
    <scope>FUNCTION</scope>
    <scope>SUBCELLULAR LOCATION</scope>
    <scope>INDUCTION</scope>
    <scope>DISRUPTION PHENOTYPE</scope>
    <source>
        <strain evidence="4 7">M2799</strain>
    </source>
</reference>
<reference key="2">
    <citation type="journal article" date="2020" name="BioMetals">
        <title>VuuB and IutB reduce ferric-vulnibactin in Vibrio vulnificus M2799.</title>
        <authorList>
            <person name="Okai N."/>
            <person name="Miyamoto K."/>
            <person name="Tomoo K."/>
            <person name="Tsuchiya T."/>
            <person name="Komano J."/>
            <person name="Tanabe T."/>
            <person name="Funahashi T."/>
            <person name="Tsujibo H."/>
        </authorList>
    </citation>
    <scope>FUNCTION</scope>
    <scope>CATALYTIC ACTIVITY</scope>
    <scope>SUBSTRATE SPECIFICITY</scope>
    <scope>BIOPHYSICOCHEMICAL PROPERTIES</scope>
    <scope>SUBUNIT</scope>
    <scope>INDUCTION</scope>
    <scope>DISRUPTION PHENOTYPE</scope>
    <source>
        <strain evidence="5">M2799</strain>
    </source>
</reference>
<feature type="chain" id="PRO_0000458466" description="Ferric aerobactin reductase IutB">
    <location>
        <begin position="1"/>
        <end position="244"/>
    </location>
</feature>
<feature type="binding site" evidence="1">
    <location>
        <position position="220"/>
    </location>
    <ligand>
        <name>[2Fe-2S] cluster</name>
        <dbReference type="ChEBI" id="CHEBI:190135"/>
    </ligand>
</feature>
<feature type="binding site" evidence="1">
    <location>
        <position position="221"/>
    </location>
    <ligand>
        <name>[2Fe-2S] cluster</name>
        <dbReference type="ChEBI" id="CHEBI:190135"/>
    </ligand>
</feature>
<feature type="binding site" evidence="1">
    <location>
        <position position="232"/>
    </location>
    <ligand>
        <name>[2Fe-2S] cluster</name>
        <dbReference type="ChEBI" id="CHEBI:190135"/>
    </ligand>
</feature>
<feature type="binding site" evidence="1">
    <location>
        <position position="235"/>
    </location>
    <ligand>
        <name>[2Fe-2S] cluster</name>
        <dbReference type="ChEBI" id="CHEBI:190135"/>
    </ligand>
</feature>
<gene>
    <name evidence="4 5 7" type="primary">iutB</name>
</gene>
<accession>A0A1W7HCY1</accession>
<proteinExistence type="evidence at protein level"/>
<dbReference type="EC" id="1.16.1.10" evidence="3"/>
<dbReference type="EMBL" id="LC194887">
    <property type="protein sequence ID" value="BAX35098.1"/>
    <property type="molecule type" value="Genomic_DNA"/>
</dbReference>
<dbReference type="GO" id="GO:0005737">
    <property type="term" value="C:cytoplasm"/>
    <property type="evidence" value="ECO:0000314"/>
    <property type="project" value="UniProtKB"/>
</dbReference>
<dbReference type="GO" id="GO:0051537">
    <property type="term" value="F:2 iron, 2 sulfur cluster binding"/>
    <property type="evidence" value="ECO:0000250"/>
    <property type="project" value="UniProtKB"/>
</dbReference>
<dbReference type="GO" id="GO:0140618">
    <property type="term" value="F:ferric-chelate reductase (NADH) activity"/>
    <property type="evidence" value="ECO:0000314"/>
    <property type="project" value="UniProtKB"/>
</dbReference>
<dbReference type="GO" id="GO:0052851">
    <property type="term" value="F:ferric-chelate reductase (NADPH) activity"/>
    <property type="evidence" value="ECO:0000314"/>
    <property type="project" value="UniProtKB"/>
</dbReference>
<dbReference type="GO" id="GO:0046872">
    <property type="term" value="F:metal ion binding"/>
    <property type="evidence" value="ECO:0007669"/>
    <property type="project" value="UniProtKB-KW"/>
</dbReference>
<dbReference type="GO" id="GO:0010106">
    <property type="term" value="P:cellular response to iron ion starvation"/>
    <property type="evidence" value="ECO:0000270"/>
    <property type="project" value="UniProtKB"/>
</dbReference>
<dbReference type="InterPro" id="IPR023998">
    <property type="entry name" value="FCR-like"/>
</dbReference>
<dbReference type="InterPro" id="IPR024726">
    <property type="entry name" value="FhuF_C"/>
</dbReference>
<dbReference type="NCBIfam" id="TIGR03950">
    <property type="entry name" value="sidero_Fe_reduc"/>
    <property type="match status" value="1"/>
</dbReference>
<dbReference type="Pfam" id="PF11575">
    <property type="entry name" value="FhuF_C"/>
    <property type="match status" value="1"/>
</dbReference>